<name>FMT_ELUMP</name>
<proteinExistence type="inferred from homology"/>
<keyword id="KW-0648">Protein biosynthesis</keyword>
<keyword id="KW-1185">Reference proteome</keyword>
<keyword id="KW-0808">Transferase</keyword>
<organism>
    <name type="scientific">Elusimicrobium minutum (strain Pei191)</name>
    <dbReference type="NCBI Taxonomy" id="445932"/>
    <lineage>
        <taxon>Bacteria</taxon>
        <taxon>Pseudomonadati</taxon>
        <taxon>Elusimicrobiota</taxon>
        <taxon>Elusimicrobia</taxon>
        <taxon>Elusimicrobiales</taxon>
        <taxon>Elusimicrobiaceae</taxon>
        <taxon>Elusimicrobium</taxon>
    </lineage>
</organism>
<dbReference type="EC" id="2.1.2.9" evidence="1"/>
<dbReference type="EMBL" id="CP001055">
    <property type="protein sequence ID" value="ACC98300.1"/>
    <property type="molecule type" value="Genomic_DNA"/>
</dbReference>
<dbReference type="RefSeq" id="WP_012414915.1">
    <property type="nucleotide sequence ID" value="NC_010644.1"/>
</dbReference>
<dbReference type="SMR" id="B2KCQ4"/>
<dbReference type="STRING" id="445932.Emin_0745"/>
<dbReference type="KEGG" id="emi:Emin_0745"/>
<dbReference type="HOGENOM" id="CLU_033347_1_1_0"/>
<dbReference type="OrthoDB" id="9802815at2"/>
<dbReference type="Proteomes" id="UP000001029">
    <property type="component" value="Chromosome"/>
</dbReference>
<dbReference type="GO" id="GO:0005829">
    <property type="term" value="C:cytosol"/>
    <property type="evidence" value="ECO:0007669"/>
    <property type="project" value="TreeGrafter"/>
</dbReference>
<dbReference type="GO" id="GO:0004479">
    <property type="term" value="F:methionyl-tRNA formyltransferase activity"/>
    <property type="evidence" value="ECO:0007669"/>
    <property type="project" value="UniProtKB-UniRule"/>
</dbReference>
<dbReference type="CDD" id="cd08646">
    <property type="entry name" value="FMT_core_Met-tRNA-FMT_N"/>
    <property type="match status" value="1"/>
</dbReference>
<dbReference type="CDD" id="cd08704">
    <property type="entry name" value="Met_tRNA_FMT_C"/>
    <property type="match status" value="1"/>
</dbReference>
<dbReference type="Gene3D" id="3.40.50.12230">
    <property type="match status" value="1"/>
</dbReference>
<dbReference type="HAMAP" id="MF_00182">
    <property type="entry name" value="Formyl_trans"/>
    <property type="match status" value="1"/>
</dbReference>
<dbReference type="InterPro" id="IPR005794">
    <property type="entry name" value="Fmt"/>
</dbReference>
<dbReference type="InterPro" id="IPR005793">
    <property type="entry name" value="Formyl_trans_C"/>
</dbReference>
<dbReference type="InterPro" id="IPR002376">
    <property type="entry name" value="Formyl_transf_N"/>
</dbReference>
<dbReference type="InterPro" id="IPR036477">
    <property type="entry name" value="Formyl_transf_N_sf"/>
</dbReference>
<dbReference type="InterPro" id="IPR011034">
    <property type="entry name" value="Formyl_transferase-like_C_sf"/>
</dbReference>
<dbReference type="InterPro" id="IPR044135">
    <property type="entry name" value="Met-tRNA-FMT_C"/>
</dbReference>
<dbReference type="InterPro" id="IPR041711">
    <property type="entry name" value="Met-tRNA-FMT_N"/>
</dbReference>
<dbReference type="NCBIfam" id="TIGR00460">
    <property type="entry name" value="fmt"/>
    <property type="match status" value="1"/>
</dbReference>
<dbReference type="PANTHER" id="PTHR11138">
    <property type="entry name" value="METHIONYL-TRNA FORMYLTRANSFERASE"/>
    <property type="match status" value="1"/>
</dbReference>
<dbReference type="PANTHER" id="PTHR11138:SF5">
    <property type="entry name" value="METHIONYL-TRNA FORMYLTRANSFERASE, MITOCHONDRIAL"/>
    <property type="match status" value="1"/>
</dbReference>
<dbReference type="Pfam" id="PF02911">
    <property type="entry name" value="Formyl_trans_C"/>
    <property type="match status" value="1"/>
</dbReference>
<dbReference type="Pfam" id="PF00551">
    <property type="entry name" value="Formyl_trans_N"/>
    <property type="match status" value="1"/>
</dbReference>
<dbReference type="SUPFAM" id="SSF50486">
    <property type="entry name" value="FMT C-terminal domain-like"/>
    <property type="match status" value="1"/>
</dbReference>
<dbReference type="SUPFAM" id="SSF53328">
    <property type="entry name" value="Formyltransferase"/>
    <property type="match status" value="1"/>
</dbReference>
<feature type="chain" id="PRO_1000098403" description="Methionyl-tRNA formyltransferase">
    <location>
        <begin position="1"/>
        <end position="333"/>
    </location>
</feature>
<feature type="binding site" evidence="1">
    <location>
        <begin position="106"/>
        <end position="109"/>
    </location>
    <ligand>
        <name>(6S)-5,6,7,8-tetrahydrofolate</name>
        <dbReference type="ChEBI" id="CHEBI:57453"/>
    </ligand>
</feature>
<gene>
    <name evidence="1" type="primary">fmt</name>
    <name type="ordered locus">Emin_0745</name>
</gene>
<protein>
    <recommendedName>
        <fullName evidence="1">Methionyl-tRNA formyltransferase</fullName>
        <ecNumber evidence="1">2.1.2.9</ecNumber>
    </recommendedName>
</protein>
<accession>B2KCQ4</accession>
<comment type="function">
    <text evidence="1">Attaches a formyl group to the free amino group of methionyl-tRNA(fMet). The formyl group appears to play a dual role in the initiator identity of N-formylmethionyl-tRNA by promoting its recognition by IF2 and preventing the misappropriation of this tRNA by the elongation apparatus.</text>
</comment>
<comment type="catalytic activity">
    <reaction evidence="1">
        <text>L-methionyl-tRNA(fMet) + (6R)-10-formyltetrahydrofolate = N-formyl-L-methionyl-tRNA(fMet) + (6S)-5,6,7,8-tetrahydrofolate + H(+)</text>
        <dbReference type="Rhea" id="RHEA:24380"/>
        <dbReference type="Rhea" id="RHEA-COMP:9952"/>
        <dbReference type="Rhea" id="RHEA-COMP:9953"/>
        <dbReference type="ChEBI" id="CHEBI:15378"/>
        <dbReference type="ChEBI" id="CHEBI:57453"/>
        <dbReference type="ChEBI" id="CHEBI:78530"/>
        <dbReference type="ChEBI" id="CHEBI:78844"/>
        <dbReference type="ChEBI" id="CHEBI:195366"/>
        <dbReference type="EC" id="2.1.2.9"/>
    </reaction>
</comment>
<comment type="similarity">
    <text evidence="1">Belongs to the Fmt family.</text>
</comment>
<evidence type="ECO:0000255" key="1">
    <source>
        <dbReference type="HAMAP-Rule" id="MF_00182"/>
    </source>
</evidence>
<reference key="1">
    <citation type="journal article" date="2009" name="Appl. Environ. Microbiol.">
        <title>Genomic analysis of 'Elusimicrobium minutum,' the first cultivated representative of the phylum 'Elusimicrobia' (formerly termite group 1).</title>
        <authorList>
            <person name="Herlemann D.P.R."/>
            <person name="Geissinger O."/>
            <person name="Ikeda-Ohtsubo W."/>
            <person name="Kunin V."/>
            <person name="Sun H."/>
            <person name="Lapidus A."/>
            <person name="Hugenholtz P."/>
            <person name="Brune A."/>
        </authorList>
    </citation>
    <scope>NUCLEOTIDE SEQUENCE [LARGE SCALE GENOMIC DNA]</scope>
    <source>
        <strain>Pei191</strain>
    </source>
</reference>
<sequence>MKTIFFGTPEVAVPYLEILNRYTEVVLVVTQPDRPRGRGMVITPCPVKETALKMGLKVLSPEKITDIEADLKAAGADYGIAVAYGQILKQHIIDIPKLGIVNIHFSLLPKFRGAAPVQHTLFAGETKTGVTAFWIDKGMDTGPVFAYKETDILPSEDAKTLFTKLISLGGILLEDVIEYIRLGQIVKIPQTKNIFTPQEDGSMFKEELPLPTYAPMIKKEDTILDFNNFGAETFFNRVRGLACGPHAKVITKINGKEDLLQIIKASLLEKNKQCPPNMPRGSVVSIENDGRILVKCYDSCIYIDIVRPAGKKDMTAASFANGHKIKPGDVIFY</sequence>